<feature type="signal peptide" evidence="3">
    <location>
        <begin position="1"/>
        <end position="23"/>
    </location>
</feature>
<feature type="chain" id="PRO_0000460141" description="Long form salivary protein D7L1" evidence="3">
    <location>
        <begin position="24"/>
        <end position="316"/>
    </location>
</feature>
<feature type="disulfide bond" evidence="2">
    <location>
        <begin position="40"/>
        <end position="76"/>
    </location>
</feature>
<feature type="disulfide bond" evidence="2">
    <location>
        <begin position="72"/>
        <end position="131"/>
    </location>
</feature>
<feature type="disulfide bond" evidence="2">
    <location>
        <begin position="181"/>
        <end position="214"/>
    </location>
</feature>
<feature type="disulfide bond" evidence="2">
    <location>
        <begin position="255"/>
        <end position="266"/>
    </location>
</feature>
<protein>
    <recommendedName>
        <fullName evidence="6">Long form salivary protein D7L1</fullName>
        <shortName evidence="5">AnAtr-D7L1</shortName>
    </recommendedName>
</protein>
<keyword id="KW-1015">Disulfide bond</keyword>
<keyword id="KW-0964">Secreted</keyword>
<keyword id="KW-0732">Signal</keyword>
<comment type="function">
    <text evidence="1 4">Modulates blood feeding of female mosquitoes on vertebrate species by binding and sequestering different mediators involved in the host response, such as biogenic amines and eicosanoids (By similarity). Binds serotonin, tryptamine, histamine, leukotriene C4, leukotriene D4 and leukotriene E4 (PubMed:35568118). Does not bind octopamine, dopamine, noradrenaline, adrenaline and prostaglandin PGF2alpha (PubMed:35568118).</text>
</comment>
<comment type="subcellular location">
    <subcellularLocation>
        <location evidence="1">Secreted</location>
    </subcellularLocation>
</comment>
<comment type="similarity">
    <text evidence="6">Belongs to the PBP/GOBP family.</text>
</comment>
<accession>A0A182IRF8</accession>
<organism>
    <name type="scientific">Anopheles atroparvus</name>
    <name type="common">European mosquito</name>
    <dbReference type="NCBI Taxonomy" id="41427"/>
    <lineage>
        <taxon>Eukaryota</taxon>
        <taxon>Metazoa</taxon>
        <taxon>Ecdysozoa</taxon>
        <taxon>Arthropoda</taxon>
        <taxon>Hexapoda</taxon>
        <taxon>Insecta</taxon>
        <taxon>Pterygota</taxon>
        <taxon>Neoptera</taxon>
        <taxon>Endopterygota</taxon>
        <taxon>Diptera</taxon>
        <taxon>Nematocera</taxon>
        <taxon>Culicoidea</taxon>
        <taxon>Culicidae</taxon>
        <taxon>Anophelinae</taxon>
        <taxon>Anopheles</taxon>
    </lineage>
</organism>
<dbReference type="SMR" id="A0A182IRF8"/>
<dbReference type="VEuPathDB" id="VectorBase:AATE004070"/>
<dbReference type="Proteomes" id="UP000075880">
    <property type="component" value="Unplaced"/>
</dbReference>
<dbReference type="GO" id="GO:0005615">
    <property type="term" value="C:extracellular space"/>
    <property type="evidence" value="ECO:0007669"/>
    <property type="project" value="TreeGrafter"/>
</dbReference>
<dbReference type="GO" id="GO:0005549">
    <property type="term" value="F:odorant binding"/>
    <property type="evidence" value="ECO:0007669"/>
    <property type="project" value="InterPro"/>
</dbReference>
<dbReference type="GO" id="GO:0007608">
    <property type="term" value="P:sensory perception of smell"/>
    <property type="evidence" value="ECO:0007669"/>
    <property type="project" value="TreeGrafter"/>
</dbReference>
<dbReference type="CDD" id="cd23992">
    <property type="entry name" value="PBP_GOBP"/>
    <property type="match status" value="1"/>
</dbReference>
<dbReference type="Gene3D" id="1.10.238.20">
    <property type="entry name" value="Pheromone/general odorant binding protein domain"/>
    <property type="match status" value="2"/>
</dbReference>
<dbReference type="InterPro" id="IPR006170">
    <property type="entry name" value="PBP/GOBP"/>
</dbReference>
<dbReference type="InterPro" id="IPR036728">
    <property type="entry name" value="PBP_GOBP_sf"/>
</dbReference>
<dbReference type="PANTHER" id="PTHR11857:SF43">
    <property type="entry name" value="GEO07291P1-RELATED"/>
    <property type="match status" value="1"/>
</dbReference>
<dbReference type="PANTHER" id="PTHR11857">
    <property type="entry name" value="ODORANT BINDING PROTEIN-RELATED"/>
    <property type="match status" value="1"/>
</dbReference>
<dbReference type="Pfam" id="PF01395">
    <property type="entry name" value="PBP_GOBP"/>
    <property type="match status" value="2"/>
</dbReference>
<dbReference type="SUPFAM" id="SSF47565">
    <property type="entry name" value="Insect pheromone/odorant-binding proteins"/>
    <property type="match status" value="2"/>
</dbReference>
<evidence type="ECO:0000250" key="1">
    <source>
        <dbReference type="UniProtKB" id="P18153"/>
    </source>
</evidence>
<evidence type="ECO:0000250" key="2">
    <source>
        <dbReference type="UniProtKB" id="Q95NY5"/>
    </source>
</evidence>
<evidence type="ECO:0000255" key="3"/>
<evidence type="ECO:0000269" key="4">
    <source>
    </source>
</evidence>
<evidence type="ECO:0000303" key="5">
    <source>
    </source>
</evidence>
<evidence type="ECO:0000305" key="6"/>
<sequence>MSHTRAVVLAVACLCLILVQVEGTWNALDPEQMRFIHSRCFEDNLPAGPKRALYASKWIKWELEPNDETTHCFAKCVLEGIQLYDSKSKKFRSKRITIQHEAYKTFTGANDDEVAKYKQAVAALRVGSGSCSDVFNTYLPVHKQFHDVSQLVYLSVSAVAAKIYEADPNVKRKGESFAEYCAKRAWDEKTKGDACKARKYELTGSNELKAAIDCIFRGFRYINENGFNPDEIVRDFKLINKPELEPQVRSVLSKCAGEKAYEYYSCLLQSNVKEDFKHAFDFRELRSVDYSYLVKGNVYDPAKLKEEMAKADAKVC</sequence>
<gene>
    <name evidence="5" type="primary">D7L1</name>
</gene>
<proteinExistence type="inferred from homology"/>
<name>D7L1_ANOAO</name>
<reference evidence="6" key="1">
    <citation type="submission" date="2013-09" db="EMBL/GenBank/DDBJ databases">
        <authorList>
            <person name="Neafsey D.E."/>
            <person name="Besansky N."/>
            <person name="Howell P."/>
            <person name="Walton C."/>
            <person name="Young S.K."/>
            <person name="Zeng Q."/>
            <person name="Gargeya S."/>
            <person name="Fitzgerald M."/>
            <person name="Haas B."/>
            <person name="Abouelleil A."/>
            <person name="Allen A.W."/>
            <person name="Alvarado L."/>
            <person name="Arachchi H.M."/>
            <person name="Berlin A.M."/>
            <person name="Chapman S.B."/>
            <person name="Gainer-Dewar J."/>
            <person name="Goldberg J."/>
            <person name="Griggs A."/>
            <person name="Gujja S."/>
            <person name="Hansen M."/>
            <person name="Howarth C."/>
            <person name="Imamovic A."/>
            <person name="Ireland A."/>
            <person name="Larimer J."/>
            <person name="McCowan C."/>
            <person name="Murphy C."/>
            <person name="Pearson M."/>
            <person name="Poon T.W."/>
            <person name="Priest M."/>
            <person name="Roberts A."/>
            <person name="Saif S."/>
            <person name="Shea T."/>
            <person name="Sisk P."/>
            <person name="Sykes S."/>
            <person name="Wortman J."/>
            <person name="Nusbaum C."/>
            <person name="Birren B."/>
        </authorList>
    </citation>
    <scope>THE BROAD INSTITUTE GENOMICS PLATFORM</scope>
</reference>
<reference evidence="6" key="2">
    <citation type="journal article" date="2022" name="Insect Biochem. Mol. Biol.">
        <title>Functional aspects of evolution in a cluster of salivary protein genes from mosquitoes.</title>
        <authorList>
            <person name="Alvarenga P.H."/>
            <person name="Dias D.R."/>
            <person name="Xu X."/>
            <person name="Francischetti I.M.B."/>
            <person name="Gittis A.G."/>
            <person name="Arp G."/>
            <person name="Garboczi D.N."/>
            <person name="Ribeiro J.M.C."/>
            <person name="Andersen J.F."/>
        </authorList>
    </citation>
    <scope>FUNCTION</scope>
</reference>